<proteinExistence type="evidence at transcript level"/>
<keyword id="KW-0067">ATP-binding</keyword>
<keyword id="KW-0170">Cobalt</keyword>
<keyword id="KW-0963">Cytoplasm</keyword>
<keyword id="KW-0460">Magnesium</keyword>
<keyword id="KW-0479">Metal-binding</keyword>
<keyword id="KW-0547">Nucleotide-binding</keyword>
<keyword id="KW-0554">One-carbon metabolism</keyword>
<keyword id="KW-0630">Potassium</keyword>
<keyword id="KW-0808">Transferase</keyword>
<reference key="1">
    <citation type="journal article" date="2006" name="Plant Biotechnol.">
        <title>Transcriptional response of glycinebetaine-related genes to salt stress and light in leaf beet.</title>
        <authorList>
            <person name="Tabuchi T."/>
            <person name="Okada T."/>
            <person name="Takashima Y."/>
            <person name="Azuma T."/>
            <person name="Nanmori T."/>
            <person name="Yasuda T."/>
        </authorList>
    </citation>
    <scope>NUCLEOTIDE SEQUENCE [MRNA]</scope>
    <scope>FUNCTION</scope>
    <scope>INDUCTION</scope>
    <source>
        <tissue>Leaf</tissue>
    </source>
</reference>
<comment type="function">
    <text evidence="5 8">Catalyzes the formation of S-adenosylmethionine from methionine and ATP. The reaction comprises two steps that are both catalyzed by the same enzyme: formation of S-adenosylmethionine (AdoMet) and triphosphate, and subsequent hydrolysis of the triphosphate (By similarity). May be involved in the synthesis of betain in response to abiotic stress such as high salinity (Ref.1).</text>
</comment>
<comment type="catalytic activity">
    <reaction evidence="5">
        <text>L-methionine + ATP + H2O = S-adenosyl-L-methionine + phosphate + diphosphate</text>
        <dbReference type="Rhea" id="RHEA:21080"/>
        <dbReference type="ChEBI" id="CHEBI:15377"/>
        <dbReference type="ChEBI" id="CHEBI:30616"/>
        <dbReference type="ChEBI" id="CHEBI:33019"/>
        <dbReference type="ChEBI" id="CHEBI:43474"/>
        <dbReference type="ChEBI" id="CHEBI:57844"/>
        <dbReference type="ChEBI" id="CHEBI:59789"/>
        <dbReference type="EC" id="2.5.1.6"/>
    </reaction>
</comment>
<comment type="cofactor">
    <cofactor evidence="5">
        <name>Mn(2+)</name>
        <dbReference type="ChEBI" id="CHEBI:29035"/>
    </cofactor>
    <cofactor evidence="5">
        <name>Mg(2+)</name>
        <dbReference type="ChEBI" id="CHEBI:18420"/>
    </cofactor>
    <cofactor evidence="5">
        <name>Co(2+)</name>
        <dbReference type="ChEBI" id="CHEBI:48828"/>
    </cofactor>
    <text evidence="3 5">Binds 2 divalent ions per subunit. The metal ions interact primarily with the substrate (By similarity). Can utilize magnesium, manganese or cobalt (in vitro) (By similarity).</text>
</comment>
<comment type="cofactor">
    <cofactor evidence="5">
        <name>K(+)</name>
        <dbReference type="ChEBI" id="CHEBI:29103"/>
    </cofactor>
    <text evidence="3">Binds 1 potassium ion per subunit. The potassium ion interacts primarily with the substrate (By similarity).</text>
</comment>
<comment type="pathway">
    <text evidence="5">Amino-acid biosynthesis; S-adenosyl-L-methionine biosynthesis; S-adenosyl-L-methionine from L-methionine: step 1/1.</text>
</comment>
<comment type="subunit">
    <text evidence="1">Homotetramer.</text>
</comment>
<comment type="subcellular location">
    <subcellularLocation>
        <location evidence="1">Cytoplasm</location>
    </subcellularLocation>
</comment>
<comment type="induction">
    <text evidence="6">Follow a circadian regulation with higher levels in the light.</text>
</comment>
<comment type="similarity">
    <text evidence="7">Belongs to the AdoMet synthase family.</text>
</comment>
<protein>
    <recommendedName>
        <fullName>S-adenosylmethionine synthase 2</fullName>
        <shortName>AdoMet synthase 2</shortName>
        <ecNumber evidence="5">2.5.1.6</ecNumber>
    </recommendedName>
    <alternativeName>
        <fullName>Methionine adenosyltransferase 2</fullName>
        <shortName>MAT 2</shortName>
    </alternativeName>
</protein>
<dbReference type="EC" id="2.5.1.6" evidence="5"/>
<dbReference type="EMBL" id="AB221010">
    <property type="protein sequence ID" value="BAE07180.1"/>
    <property type="molecule type" value="mRNA"/>
</dbReference>
<dbReference type="SMR" id="Q4H1G3"/>
<dbReference type="UniPathway" id="UPA00315">
    <property type="reaction ID" value="UER00080"/>
</dbReference>
<dbReference type="GO" id="GO:0005737">
    <property type="term" value="C:cytoplasm"/>
    <property type="evidence" value="ECO:0007669"/>
    <property type="project" value="UniProtKB-SubCell"/>
</dbReference>
<dbReference type="GO" id="GO:0005524">
    <property type="term" value="F:ATP binding"/>
    <property type="evidence" value="ECO:0007669"/>
    <property type="project" value="UniProtKB-KW"/>
</dbReference>
<dbReference type="GO" id="GO:0046872">
    <property type="term" value="F:metal ion binding"/>
    <property type="evidence" value="ECO:0007669"/>
    <property type="project" value="UniProtKB-KW"/>
</dbReference>
<dbReference type="GO" id="GO:0004478">
    <property type="term" value="F:methionine adenosyltransferase activity"/>
    <property type="evidence" value="ECO:0007669"/>
    <property type="project" value="UniProtKB-EC"/>
</dbReference>
<dbReference type="GO" id="GO:0006730">
    <property type="term" value="P:one-carbon metabolic process"/>
    <property type="evidence" value="ECO:0007669"/>
    <property type="project" value="UniProtKB-KW"/>
</dbReference>
<dbReference type="GO" id="GO:0006556">
    <property type="term" value="P:S-adenosylmethionine biosynthetic process"/>
    <property type="evidence" value="ECO:0007669"/>
    <property type="project" value="UniProtKB-UniPathway"/>
</dbReference>
<dbReference type="CDD" id="cd18079">
    <property type="entry name" value="S-AdoMet_synt"/>
    <property type="match status" value="1"/>
</dbReference>
<dbReference type="FunFam" id="3.30.300.10:FF:000001">
    <property type="entry name" value="S-adenosylmethionine synthase"/>
    <property type="match status" value="1"/>
</dbReference>
<dbReference type="FunFam" id="3.30.300.10:FF:000003">
    <property type="entry name" value="S-adenosylmethionine synthase"/>
    <property type="match status" value="1"/>
</dbReference>
<dbReference type="FunFam" id="3.30.300.10:FF:000004">
    <property type="entry name" value="S-adenosylmethionine synthase"/>
    <property type="match status" value="1"/>
</dbReference>
<dbReference type="Gene3D" id="3.30.300.10">
    <property type="match status" value="3"/>
</dbReference>
<dbReference type="HAMAP" id="MF_00086">
    <property type="entry name" value="S_AdoMet_synth1"/>
    <property type="match status" value="1"/>
</dbReference>
<dbReference type="InterPro" id="IPR022631">
    <property type="entry name" value="ADOMET_SYNTHASE_CS"/>
</dbReference>
<dbReference type="InterPro" id="IPR022630">
    <property type="entry name" value="S-AdoMet_synt_C"/>
</dbReference>
<dbReference type="InterPro" id="IPR022629">
    <property type="entry name" value="S-AdoMet_synt_central"/>
</dbReference>
<dbReference type="InterPro" id="IPR022628">
    <property type="entry name" value="S-AdoMet_synt_N"/>
</dbReference>
<dbReference type="InterPro" id="IPR002133">
    <property type="entry name" value="S-AdoMet_synthetase"/>
</dbReference>
<dbReference type="InterPro" id="IPR022636">
    <property type="entry name" value="S-AdoMet_synthetase_sfam"/>
</dbReference>
<dbReference type="NCBIfam" id="TIGR01034">
    <property type="entry name" value="metK"/>
    <property type="match status" value="1"/>
</dbReference>
<dbReference type="PANTHER" id="PTHR11964">
    <property type="entry name" value="S-ADENOSYLMETHIONINE SYNTHETASE"/>
    <property type="match status" value="1"/>
</dbReference>
<dbReference type="Pfam" id="PF02773">
    <property type="entry name" value="S-AdoMet_synt_C"/>
    <property type="match status" value="1"/>
</dbReference>
<dbReference type="Pfam" id="PF02772">
    <property type="entry name" value="S-AdoMet_synt_M"/>
    <property type="match status" value="1"/>
</dbReference>
<dbReference type="Pfam" id="PF00438">
    <property type="entry name" value="S-AdoMet_synt_N"/>
    <property type="match status" value="1"/>
</dbReference>
<dbReference type="PIRSF" id="PIRSF000497">
    <property type="entry name" value="MAT"/>
    <property type="match status" value="1"/>
</dbReference>
<dbReference type="SUPFAM" id="SSF55973">
    <property type="entry name" value="S-adenosylmethionine synthetase"/>
    <property type="match status" value="3"/>
</dbReference>
<dbReference type="PROSITE" id="PS00376">
    <property type="entry name" value="ADOMET_SYNTHASE_1"/>
    <property type="match status" value="1"/>
</dbReference>
<dbReference type="PROSITE" id="PS00377">
    <property type="entry name" value="ADOMET_SYNTHASE_2"/>
    <property type="match status" value="1"/>
</dbReference>
<evidence type="ECO:0000250" key="1"/>
<evidence type="ECO:0000250" key="2">
    <source>
        <dbReference type="UniProtKB" id="P0A817"/>
    </source>
</evidence>
<evidence type="ECO:0000250" key="3">
    <source>
        <dbReference type="UniProtKB" id="P13444"/>
    </source>
</evidence>
<evidence type="ECO:0000250" key="4">
    <source>
        <dbReference type="UniProtKB" id="Q00266"/>
    </source>
</evidence>
<evidence type="ECO:0000250" key="5">
    <source>
        <dbReference type="UniProtKB" id="Q96551"/>
    </source>
</evidence>
<evidence type="ECO:0000269" key="6">
    <source ref="1"/>
</evidence>
<evidence type="ECO:0000305" key="7"/>
<evidence type="ECO:0000305" key="8">
    <source ref="1"/>
</evidence>
<feature type="chain" id="PRO_0000363010" description="S-adenosylmethionine synthase 2">
    <location>
        <begin position="1"/>
        <end position="393"/>
    </location>
</feature>
<feature type="binding site" evidence="3">
    <location>
        <position position="9"/>
    </location>
    <ligand>
        <name>Mg(2+)</name>
        <dbReference type="ChEBI" id="CHEBI:18420"/>
    </ligand>
</feature>
<feature type="binding site" description="in other chain" evidence="4">
    <location>
        <position position="15"/>
    </location>
    <ligand>
        <name>ATP</name>
        <dbReference type="ChEBI" id="CHEBI:30616"/>
        <note>ligand shared between two neighboring subunits</note>
    </ligand>
</feature>
<feature type="binding site" evidence="2">
    <location>
        <position position="43"/>
    </location>
    <ligand>
        <name>K(+)</name>
        <dbReference type="ChEBI" id="CHEBI:29103"/>
    </ligand>
</feature>
<feature type="binding site" description="in other chain" evidence="2">
    <location>
        <position position="56"/>
    </location>
    <ligand>
        <name>L-methionine</name>
        <dbReference type="ChEBI" id="CHEBI:57844"/>
        <note>ligand shared between two neighboring subunits</note>
    </ligand>
</feature>
<feature type="binding site" description="in other chain" evidence="2">
    <location>
        <position position="99"/>
    </location>
    <ligand>
        <name>L-methionine</name>
        <dbReference type="ChEBI" id="CHEBI:57844"/>
        <note>ligand shared between two neighboring subunits</note>
    </ligand>
</feature>
<feature type="binding site" description="in other chain" evidence="4">
    <location>
        <begin position="167"/>
        <end position="169"/>
    </location>
    <ligand>
        <name>ATP</name>
        <dbReference type="ChEBI" id="CHEBI:30616"/>
        <note>ligand shared between two neighboring subunits</note>
    </ligand>
</feature>
<feature type="binding site" description="in other chain" evidence="4">
    <location>
        <begin position="235"/>
        <end position="238"/>
    </location>
    <ligand>
        <name>ATP</name>
        <dbReference type="ChEBI" id="CHEBI:30616"/>
        <note>ligand shared between two neighboring subunits</note>
    </ligand>
</feature>
<feature type="binding site" description="in other chain" evidence="4">
    <location>
        <position position="246"/>
    </location>
    <ligand>
        <name>ATP</name>
        <dbReference type="ChEBI" id="CHEBI:30616"/>
        <note>ligand shared between two neighboring subunits</note>
    </ligand>
</feature>
<feature type="binding site" evidence="2">
    <location>
        <position position="246"/>
    </location>
    <ligand>
        <name>L-methionine</name>
        <dbReference type="ChEBI" id="CHEBI:57844"/>
        <note>ligand shared between two neighboring subunits</note>
    </ligand>
</feature>
<feature type="binding site" description="in other chain" evidence="2">
    <location>
        <begin position="252"/>
        <end position="253"/>
    </location>
    <ligand>
        <name>ATP</name>
        <dbReference type="ChEBI" id="CHEBI:30616"/>
        <note>ligand shared between two neighboring subunits</note>
    </ligand>
</feature>
<feature type="binding site" evidence="2">
    <location>
        <position position="269"/>
    </location>
    <ligand>
        <name>ATP</name>
        <dbReference type="ChEBI" id="CHEBI:30616"/>
        <note>ligand shared between two neighboring subunits</note>
    </ligand>
</feature>
<feature type="binding site" evidence="2">
    <location>
        <position position="273"/>
    </location>
    <ligand>
        <name>ATP</name>
        <dbReference type="ChEBI" id="CHEBI:30616"/>
        <note>ligand shared between two neighboring subunits</note>
    </ligand>
</feature>
<feature type="binding site" evidence="3">
    <location>
        <position position="277"/>
    </location>
    <ligand>
        <name>ATP</name>
        <dbReference type="ChEBI" id="CHEBI:30616"/>
        <note>ligand shared between two neighboring subunits</note>
    </ligand>
</feature>
<feature type="binding site" description="in other chain" evidence="2">
    <location>
        <position position="277"/>
    </location>
    <ligand>
        <name>L-methionine</name>
        <dbReference type="ChEBI" id="CHEBI:57844"/>
        <note>ligand shared between two neighboring subunits</note>
    </ligand>
</feature>
<organism>
    <name type="scientific">Beta vulgaris</name>
    <name type="common">Sugar beet</name>
    <dbReference type="NCBI Taxonomy" id="161934"/>
    <lineage>
        <taxon>Eukaryota</taxon>
        <taxon>Viridiplantae</taxon>
        <taxon>Streptophyta</taxon>
        <taxon>Embryophyta</taxon>
        <taxon>Tracheophyta</taxon>
        <taxon>Spermatophyta</taxon>
        <taxon>Magnoliopsida</taxon>
        <taxon>eudicotyledons</taxon>
        <taxon>Gunneridae</taxon>
        <taxon>Pentapetalae</taxon>
        <taxon>Caryophyllales</taxon>
        <taxon>Chenopodiaceae</taxon>
        <taxon>Betoideae</taxon>
        <taxon>Beta</taxon>
    </lineage>
</organism>
<gene>
    <name type="primary">SAMS2</name>
</gene>
<name>METK2_BETVU</name>
<sequence>METFLFTSESVNEGHPDKLCDQVSDAVLDACLAQDPESKVACETCTKTNMVMVFGEITTKAEVDYEKIVRDTCRSIGFTSDDVGLDADKCKVLVNIEQQSPDIAQGVHGHLTKRPEEIGAGDQGHMFGYATDETPELMPLSHVLATKLGARLTEVRKNGACAWLRPDGKTQVTVEYYNDNGAMVPVRVHTVLISTQHDETVSNDEIAADLKEHVIKPVIPEKYLDEKTIFHLNPSGRFVIGGPHGDAGLTGRKIIIDTYGGWGAHGGGAFSGKDPTKVDRSGAYIVRQAAKSIVANGLARRAIVQVSYAIGVPEPLSVFVDTYGTGKIPDKEILKIVKETFDFRPGMMSINLDLKRGGNGRFQKTAAYGHFGRDDPDFTWEVVKPLKWEKIPA</sequence>
<accession>Q4H1G3</accession>